<protein>
    <recommendedName>
        <fullName>Glycosylation-dependent cell adhesion molecule 1</fullName>
        <shortName>GlyCAM-1</shortName>
    </recommendedName>
    <alternativeName>
        <fullName>Lactophorin</fullName>
    </alternativeName>
    <alternativeName>
        <fullName>Proteose-peptone component 3</fullName>
        <shortName>PP3</shortName>
    </alternativeName>
    <alternativeName>
        <fullName>Whey protein</fullName>
    </alternativeName>
</protein>
<evidence type="ECO:0000250" key="1">
    <source>
        <dbReference type="UniProtKB" id="P80195"/>
    </source>
</evidence>
<evidence type="ECO:0000256" key="2">
    <source>
        <dbReference type="SAM" id="MobiDB-lite"/>
    </source>
</evidence>
<evidence type="ECO:0000269" key="3">
    <source>
    </source>
</evidence>
<evidence type="ECO:0000269" key="4">
    <source>
    </source>
</evidence>
<evidence type="ECO:0000305" key="5"/>
<organism>
    <name type="scientific">Camelus dromedarius</name>
    <name type="common">Dromedary</name>
    <name type="synonym">Arabian camel</name>
    <dbReference type="NCBI Taxonomy" id="9838"/>
    <lineage>
        <taxon>Eukaryota</taxon>
        <taxon>Metazoa</taxon>
        <taxon>Chordata</taxon>
        <taxon>Craniata</taxon>
        <taxon>Vertebrata</taxon>
        <taxon>Euteleostomi</taxon>
        <taxon>Mammalia</taxon>
        <taxon>Eutheria</taxon>
        <taxon>Laurasiatheria</taxon>
        <taxon>Artiodactyla</taxon>
        <taxon>Tylopoda</taxon>
        <taxon>Camelidae</taxon>
        <taxon>Camelus</taxon>
    </lineage>
</organism>
<name>GLCM1_CAMDR</name>
<gene>
    <name type="primary">GLYCAM1</name>
</gene>
<comment type="alternative products">
    <event type="alternative splicing"/>
    <isoform>
        <id>P15522-1</id>
        <name>A</name>
        <sequence type="displayed"/>
    </isoform>
    <isoform>
        <id>P15522-2</id>
        <name>B</name>
        <sequence type="described" ref="VSP_005082 VSP_005083"/>
    </isoform>
</comment>
<comment type="tissue specificity">
    <text evidence="3">Highly expressed in whey fraction of camel milk.</text>
</comment>
<comment type="mass spectrometry" mass="15706.0" method="MALDI" evidence="3"/>
<comment type="mass spectrometry" mass="13822.0" method="MALDI" evidence="3">
    <molecule>Isoform B</molecule>
    <text>The measured range is 19-140.</text>
</comment>
<comment type="similarity">
    <text evidence="5">Belongs to the PP3/GlyCAM-1 family.</text>
</comment>
<proteinExistence type="evidence at protein level"/>
<sequence length="155" mass="17292">MKFFAVLLLASLAATSLASLNEPKDEIYMESQPTDTSAQVIMSNHQVSSEDLSMEPSISREDLVSKDDVVIKSARRHQNQNPKLLHPVPQESSFRNTATQSEETKELTPGAATTLEGKLVELTHKIIKNLENTMRETMDFLKSLFPHASEVVKPQ</sequence>
<dbReference type="EMBL" id="AJ131714">
    <property type="protein sequence ID" value="CAB53388.1"/>
    <property type="molecule type" value="Genomic_DNA"/>
</dbReference>
<dbReference type="EMBL" id="AJ131714">
    <property type="protein sequence ID" value="CAB53389.1"/>
    <property type="molecule type" value="Genomic_DNA"/>
</dbReference>
<dbReference type="PIR" id="S00006">
    <property type="entry name" value="S00006"/>
</dbReference>
<dbReference type="SMR" id="P15522"/>
<dbReference type="STRING" id="9838.ENSCDRP00005015177"/>
<dbReference type="GlyCosmos" id="P15522">
    <property type="glycosylation" value="1 site, No reported glycans"/>
</dbReference>
<dbReference type="iPTMnet" id="P15522"/>
<dbReference type="GO" id="GO:0005576">
    <property type="term" value="C:extracellular region"/>
    <property type="evidence" value="ECO:0000314"/>
    <property type="project" value="UniProtKB"/>
</dbReference>
<dbReference type="InterPro" id="IPR007906">
    <property type="entry name" value="GLYCAM-1"/>
</dbReference>
<dbReference type="Pfam" id="PF05242">
    <property type="entry name" value="GLYCAM-1"/>
    <property type="match status" value="1"/>
</dbReference>
<keyword id="KW-0025">Alternative splicing</keyword>
<keyword id="KW-0903">Direct protein sequencing</keyword>
<keyword id="KW-0325">Glycoprotein</keyword>
<keyword id="KW-0597">Phosphoprotein</keyword>
<keyword id="KW-0732">Signal</keyword>
<feature type="signal peptide" evidence="4">
    <location>
        <begin position="1"/>
        <end position="18"/>
    </location>
</feature>
<feature type="chain" id="PRO_0000025410" description="Glycosylation-dependent cell adhesion molecule 1">
    <location>
        <begin position="19"/>
        <end position="155"/>
    </location>
</feature>
<feature type="region of interest" description="Disordered" evidence="2">
    <location>
        <begin position="74"/>
        <end position="109"/>
    </location>
</feature>
<feature type="compositionally biased region" description="Polar residues" evidence="2">
    <location>
        <begin position="90"/>
        <end position="101"/>
    </location>
</feature>
<feature type="modified residue" description="Phosphoserine" evidence="1">
    <location>
        <position position="48"/>
    </location>
</feature>
<feature type="modified residue" description="Phosphoserine" evidence="1">
    <location>
        <position position="53"/>
    </location>
</feature>
<feature type="modified residue" description="Phosphoserine" evidence="4">
    <location>
        <position position="57"/>
    </location>
</feature>
<feature type="modified residue" description="Phosphoserine" evidence="4">
    <location>
        <position position="59"/>
    </location>
</feature>
<feature type="modified residue" description="Phosphoserine" evidence="4">
    <location>
        <position position="65"/>
    </location>
</feature>
<feature type="glycosylation site" description="O-linked (GalNAc...) threonine" evidence="4">
    <location>
        <position position="34"/>
    </location>
</feature>
<feature type="splice variant" id="VSP_005082" description="In isoform B." evidence="5">
    <location>
        <begin position="22"/>
        <end position="36"/>
    </location>
</feature>
<feature type="splice variant" id="VSP_005083" description="In isoform B." evidence="5">
    <original>S</original>
    <variation>A</variation>
    <location>
        <position position="37"/>
    </location>
</feature>
<feature type="sequence conflict" description="In Ref. 2; AA sequence." evidence="5" ref="2">
    <original>EI</original>
    <variation>IM</variation>
    <location>
        <begin position="26"/>
        <end position="27"/>
    </location>
</feature>
<feature type="sequence conflict" description="In Ref. 2; AA sequence." evidence="5" ref="2">
    <location>
        <begin position="31"/>
        <end position="55"/>
    </location>
</feature>
<feature type="sequence conflict" description="In Ref. 2; AA sequence." evidence="5" ref="2">
    <original>I</original>
    <variation>L</variation>
    <location>
        <position position="126"/>
    </location>
</feature>
<accession>P15522</accession>
<accession>Q9TTR3</accession>
<accession>Q9TUJ8</accession>
<reference key="1">
    <citation type="journal article" date="1999" name="J. Dairy Sci.">
        <title>Alternative splicing of lactophorin mRNA from lactating mammary gland of the camel (Camelus dromedarius).</title>
        <authorList>
            <person name="Kappeler S."/>
            <person name="Farah Z."/>
            <person name="Puhan Z."/>
        </authorList>
    </citation>
    <scope>NUCLEOTIDE SEQUENCE [GENOMIC DNA]</scope>
    <scope>PARTIAL PROTEIN SEQUENCE</scope>
    <scope>ALTERNATIVE SPLICING</scope>
    <scope>TISSUE SPECIFICITY</scope>
    <scope>MASS SPECTROMETRY</scope>
    <source>
        <tissue>Mammary gland</tissue>
    </source>
</reference>
<reference key="2">
    <citation type="journal article" date="1987" name="FEBS Lett.">
        <title>Characterization of a heterogeneous camel milk whey non-casein protein.</title>
        <authorList>
            <person name="Beg O.U."/>
            <person name="von Bahr-Lindstroem H."/>
            <person name="Zaidi Z.H."/>
            <person name="Joernvall H."/>
        </authorList>
    </citation>
    <scope>PROTEIN SEQUENCE OF 19-155 (ISOFORMS A AND B)</scope>
    <source>
        <tissue>Milk</tissue>
    </source>
</reference>
<reference key="3">
    <citation type="journal article" date="2000" name="Biochem. Cell Biol.">
        <title>Camel (Camelus dromedarius) milk PP3: evidence for an insertion in the amino-terminal sequence of the camel milk whey protein.</title>
        <authorList>
            <person name="Girardet J.-M."/>
            <person name="Saulnier F."/>
            <person name="Gaillard J.-L."/>
            <person name="Ramet J.-P."/>
            <person name="Humbert G."/>
        </authorList>
    </citation>
    <scope>PROTEIN SEQUENCE OF 19-147</scope>
    <scope>GLYCOSYLATION AT THR-34</scope>
    <scope>PHOSPHORYLATION AT SER-57; SER-59 AND SER-65</scope>
    <source>
        <tissue>Milk</tissue>
    </source>
</reference>